<name>RS3_CHLTA</name>
<reference key="1">
    <citation type="journal article" date="2005" name="Infect. Immun.">
        <title>Comparative genomic analysis of Chlamydia trachomatis oculotropic and genitotropic strains.</title>
        <authorList>
            <person name="Carlson J.H."/>
            <person name="Porcella S.F."/>
            <person name="McClarty G."/>
            <person name="Caldwell H.D."/>
        </authorList>
    </citation>
    <scope>NUCLEOTIDE SEQUENCE [LARGE SCALE GENOMIC DNA]</scope>
    <source>
        <strain>ATCC VR-571B / DSM 19440 / HAR-13</strain>
    </source>
</reference>
<gene>
    <name evidence="1" type="primary">rpsC</name>
    <name type="ordered locus">CTA_0571</name>
</gene>
<comment type="function">
    <text evidence="1">Binds the lower part of the 30S subunit head. Binds mRNA in the 70S ribosome, positioning it for translation.</text>
</comment>
<comment type="subunit">
    <text evidence="1">Part of the 30S ribosomal subunit. Forms a tight complex with proteins S10 and S14.</text>
</comment>
<comment type="similarity">
    <text evidence="1">Belongs to the universal ribosomal protein uS3 family.</text>
</comment>
<evidence type="ECO:0000255" key="1">
    <source>
        <dbReference type="HAMAP-Rule" id="MF_01309"/>
    </source>
</evidence>
<evidence type="ECO:0000305" key="2"/>
<sequence length="224" mass="24387">MGQKGCPIGFRTAVTKKWRSLWYGNNQEFGKFLIEDVKIREFLKKKPSCQGAAGFVVKRMSGKIEVTIHTARPGLVIGKKGAEVESLKAELKKLTGKDVWVEIAEVKRPELNAQLVADGIAKQIERRVSFRRAMKKALQSVMDAGALGVKVQVSGRLAGAEIARSEWYKNGRVPLHTLRADIDYATASAETTYGIIGIKVWINLSEKKAVPAANHAGAASTAAA</sequence>
<accession>Q3KLH5</accession>
<proteinExistence type="inferred from homology"/>
<dbReference type="EMBL" id="CP000051">
    <property type="protein sequence ID" value="AAX50797.1"/>
    <property type="molecule type" value="Genomic_DNA"/>
</dbReference>
<dbReference type="RefSeq" id="WP_011324763.1">
    <property type="nucleotide sequence ID" value="NC_007429.1"/>
</dbReference>
<dbReference type="SMR" id="Q3KLH5"/>
<dbReference type="KEGG" id="cta:CTA_0571"/>
<dbReference type="HOGENOM" id="CLU_058591_0_2_0"/>
<dbReference type="Proteomes" id="UP000002532">
    <property type="component" value="Chromosome"/>
</dbReference>
<dbReference type="GO" id="GO:0022627">
    <property type="term" value="C:cytosolic small ribosomal subunit"/>
    <property type="evidence" value="ECO:0007669"/>
    <property type="project" value="TreeGrafter"/>
</dbReference>
<dbReference type="GO" id="GO:0003729">
    <property type="term" value="F:mRNA binding"/>
    <property type="evidence" value="ECO:0007669"/>
    <property type="project" value="UniProtKB-UniRule"/>
</dbReference>
<dbReference type="GO" id="GO:0019843">
    <property type="term" value="F:rRNA binding"/>
    <property type="evidence" value="ECO:0007669"/>
    <property type="project" value="UniProtKB-UniRule"/>
</dbReference>
<dbReference type="GO" id="GO:0003735">
    <property type="term" value="F:structural constituent of ribosome"/>
    <property type="evidence" value="ECO:0007669"/>
    <property type="project" value="InterPro"/>
</dbReference>
<dbReference type="GO" id="GO:0006412">
    <property type="term" value="P:translation"/>
    <property type="evidence" value="ECO:0007669"/>
    <property type="project" value="UniProtKB-UniRule"/>
</dbReference>
<dbReference type="CDD" id="cd02412">
    <property type="entry name" value="KH-II_30S_S3"/>
    <property type="match status" value="1"/>
</dbReference>
<dbReference type="FunFam" id="3.30.300.20:FF:000001">
    <property type="entry name" value="30S ribosomal protein S3"/>
    <property type="match status" value="1"/>
</dbReference>
<dbReference type="Gene3D" id="3.30.300.20">
    <property type="match status" value="1"/>
</dbReference>
<dbReference type="Gene3D" id="3.30.1140.32">
    <property type="entry name" value="Ribosomal protein S3, C-terminal domain"/>
    <property type="match status" value="1"/>
</dbReference>
<dbReference type="HAMAP" id="MF_01309_B">
    <property type="entry name" value="Ribosomal_uS3_B"/>
    <property type="match status" value="1"/>
</dbReference>
<dbReference type="InterPro" id="IPR004087">
    <property type="entry name" value="KH_dom"/>
</dbReference>
<dbReference type="InterPro" id="IPR015946">
    <property type="entry name" value="KH_dom-like_a/b"/>
</dbReference>
<dbReference type="InterPro" id="IPR004044">
    <property type="entry name" value="KH_dom_type_2"/>
</dbReference>
<dbReference type="InterPro" id="IPR009019">
    <property type="entry name" value="KH_sf_prok-type"/>
</dbReference>
<dbReference type="InterPro" id="IPR036419">
    <property type="entry name" value="Ribosomal_S3_C_sf"/>
</dbReference>
<dbReference type="InterPro" id="IPR005704">
    <property type="entry name" value="Ribosomal_uS3_bac-typ"/>
</dbReference>
<dbReference type="InterPro" id="IPR001351">
    <property type="entry name" value="Ribosomal_uS3_C"/>
</dbReference>
<dbReference type="InterPro" id="IPR018280">
    <property type="entry name" value="Ribosomal_uS3_CS"/>
</dbReference>
<dbReference type="NCBIfam" id="TIGR01009">
    <property type="entry name" value="rpsC_bact"/>
    <property type="match status" value="1"/>
</dbReference>
<dbReference type="PANTHER" id="PTHR11760">
    <property type="entry name" value="30S/40S RIBOSOMAL PROTEIN S3"/>
    <property type="match status" value="1"/>
</dbReference>
<dbReference type="PANTHER" id="PTHR11760:SF19">
    <property type="entry name" value="SMALL RIBOSOMAL SUBUNIT PROTEIN US3C"/>
    <property type="match status" value="1"/>
</dbReference>
<dbReference type="Pfam" id="PF07650">
    <property type="entry name" value="KH_2"/>
    <property type="match status" value="1"/>
</dbReference>
<dbReference type="Pfam" id="PF00189">
    <property type="entry name" value="Ribosomal_S3_C"/>
    <property type="match status" value="1"/>
</dbReference>
<dbReference type="SMART" id="SM00322">
    <property type="entry name" value="KH"/>
    <property type="match status" value="1"/>
</dbReference>
<dbReference type="SUPFAM" id="SSF54814">
    <property type="entry name" value="Prokaryotic type KH domain (KH-domain type II)"/>
    <property type="match status" value="1"/>
</dbReference>
<dbReference type="SUPFAM" id="SSF54821">
    <property type="entry name" value="Ribosomal protein S3 C-terminal domain"/>
    <property type="match status" value="1"/>
</dbReference>
<dbReference type="PROSITE" id="PS50823">
    <property type="entry name" value="KH_TYPE_2"/>
    <property type="match status" value="1"/>
</dbReference>
<dbReference type="PROSITE" id="PS00548">
    <property type="entry name" value="RIBOSOMAL_S3"/>
    <property type="match status" value="1"/>
</dbReference>
<keyword id="KW-0687">Ribonucleoprotein</keyword>
<keyword id="KW-0689">Ribosomal protein</keyword>
<keyword id="KW-0694">RNA-binding</keyword>
<keyword id="KW-0699">rRNA-binding</keyword>
<organism>
    <name type="scientific">Chlamydia trachomatis serovar A (strain ATCC VR-571B / DSM 19440 / HAR-13)</name>
    <dbReference type="NCBI Taxonomy" id="315277"/>
    <lineage>
        <taxon>Bacteria</taxon>
        <taxon>Pseudomonadati</taxon>
        <taxon>Chlamydiota</taxon>
        <taxon>Chlamydiia</taxon>
        <taxon>Chlamydiales</taxon>
        <taxon>Chlamydiaceae</taxon>
        <taxon>Chlamydia/Chlamydophila group</taxon>
        <taxon>Chlamydia</taxon>
    </lineage>
</organism>
<protein>
    <recommendedName>
        <fullName evidence="1">Small ribosomal subunit protein uS3</fullName>
    </recommendedName>
    <alternativeName>
        <fullName evidence="2">30S ribosomal protein S3</fullName>
    </alternativeName>
</protein>
<feature type="chain" id="PRO_0000230688" description="Small ribosomal subunit protein uS3">
    <location>
        <begin position="1"/>
        <end position="224"/>
    </location>
</feature>
<feature type="domain" description="KH type-2" evidence="1">
    <location>
        <begin position="39"/>
        <end position="107"/>
    </location>
</feature>